<keyword id="KW-0997">Cell inner membrane</keyword>
<keyword id="KW-1003">Cell membrane</keyword>
<keyword id="KW-0472">Membrane</keyword>
<keyword id="KW-0653">Protein transport</keyword>
<keyword id="KW-0811">Translocation</keyword>
<keyword id="KW-0812">Transmembrane</keyword>
<keyword id="KW-1133">Transmembrane helix</keyword>
<keyword id="KW-0813">Transport</keyword>
<proteinExistence type="inferred from homology"/>
<organism>
    <name type="scientific">Pseudomonas fluorescens (strain SBW25)</name>
    <dbReference type="NCBI Taxonomy" id="216595"/>
    <lineage>
        <taxon>Bacteria</taxon>
        <taxon>Pseudomonadati</taxon>
        <taxon>Pseudomonadota</taxon>
        <taxon>Gammaproteobacteria</taxon>
        <taxon>Pseudomonadales</taxon>
        <taxon>Pseudomonadaceae</taxon>
        <taxon>Pseudomonas</taxon>
    </lineage>
</organism>
<name>TATA_PSEFS</name>
<protein>
    <recommendedName>
        <fullName evidence="1">Sec-independent protein translocase protein TatA</fullName>
    </recommendedName>
</protein>
<dbReference type="EMBL" id="AM181176">
    <property type="protein sequence ID" value="CAY46661.1"/>
    <property type="molecule type" value="Genomic_DNA"/>
</dbReference>
<dbReference type="RefSeq" id="WP_012721795.1">
    <property type="nucleotide sequence ID" value="NC_012660.1"/>
</dbReference>
<dbReference type="SMR" id="C3K8T9"/>
<dbReference type="STRING" id="294.SRM1_00433"/>
<dbReference type="eggNOG" id="COG1826">
    <property type="taxonomic scope" value="Bacteria"/>
</dbReference>
<dbReference type="HOGENOM" id="CLU_086034_5_1_6"/>
<dbReference type="GO" id="GO:0033281">
    <property type="term" value="C:TAT protein transport complex"/>
    <property type="evidence" value="ECO:0007669"/>
    <property type="project" value="UniProtKB-UniRule"/>
</dbReference>
<dbReference type="GO" id="GO:0008320">
    <property type="term" value="F:protein transmembrane transporter activity"/>
    <property type="evidence" value="ECO:0007669"/>
    <property type="project" value="UniProtKB-UniRule"/>
</dbReference>
<dbReference type="GO" id="GO:0043953">
    <property type="term" value="P:protein transport by the Tat complex"/>
    <property type="evidence" value="ECO:0007669"/>
    <property type="project" value="UniProtKB-UniRule"/>
</dbReference>
<dbReference type="FunFam" id="1.20.5.3310:FF:000001">
    <property type="entry name" value="Probable Sec-independent protein translocase protein TatE"/>
    <property type="match status" value="1"/>
</dbReference>
<dbReference type="Gene3D" id="1.20.5.3310">
    <property type="match status" value="1"/>
</dbReference>
<dbReference type="HAMAP" id="MF_00236">
    <property type="entry name" value="TatA_E"/>
    <property type="match status" value="1"/>
</dbReference>
<dbReference type="InterPro" id="IPR003369">
    <property type="entry name" value="TatA/B/E"/>
</dbReference>
<dbReference type="InterPro" id="IPR006312">
    <property type="entry name" value="TatA/E"/>
</dbReference>
<dbReference type="NCBIfam" id="NF001681">
    <property type="entry name" value="PRK00442.1"/>
    <property type="match status" value="1"/>
</dbReference>
<dbReference type="NCBIfam" id="TIGR01411">
    <property type="entry name" value="tatAE"/>
    <property type="match status" value="1"/>
</dbReference>
<dbReference type="PANTHER" id="PTHR42982">
    <property type="entry name" value="SEC-INDEPENDENT PROTEIN TRANSLOCASE PROTEIN TATA"/>
    <property type="match status" value="1"/>
</dbReference>
<dbReference type="PANTHER" id="PTHR42982:SF1">
    <property type="entry name" value="SEC-INDEPENDENT PROTEIN TRANSLOCASE PROTEIN TATA"/>
    <property type="match status" value="1"/>
</dbReference>
<dbReference type="Pfam" id="PF02416">
    <property type="entry name" value="TatA_B_E"/>
    <property type="match status" value="1"/>
</dbReference>
<evidence type="ECO:0000255" key="1">
    <source>
        <dbReference type="HAMAP-Rule" id="MF_00236"/>
    </source>
</evidence>
<evidence type="ECO:0000256" key="2">
    <source>
        <dbReference type="SAM" id="MobiDB-lite"/>
    </source>
</evidence>
<gene>
    <name evidence="1" type="primary">tatA</name>
    <name type="ordered locus">PFLU_0384</name>
</gene>
<reference key="1">
    <citation type="journal article" date="2009" name="Genome Biol.">
        <title>Genomic and genetic analyses of diversity and plant interactions of Pseudomonas fluorescens.</title>
        <authorList>
            <person name="Silby M.W."/>
            <person name="Cerdeno-Tarraga A.M."/>
            <person name="Vernikos G.S."/>
            <person name="Giddens S.R."/>
            <person name="Jackson R.W."/>
            <person name="Preston G.M."/>
            <person name="Zhang X.-X."/>
            <person name="Moon C.D."/>
            <person name="Gehrig S.M."/>
            <person name="Godfrey S.A.C."/>
            <person name="Knight C.G."/>
            <person name="Malone J.G."/>
            <person name="Robinson Z."/>
            <person name="Spiers A.J."/>
            <person name="Harris S."/>
            <person name="Challis G.L."/>
            <person name="Yaxley A.M."/>
            <person name="Harris D."/>
            <person name="Seeger K."/>
            <person name="Murphy L."/>
            <person name="Rutter S."/>
            <person name="Squares R."/>
            <person name="Quail M.A."/>
            <person name="Saunders E."/>
            <person name="Mavromatis K."/>
            <person name="Brettin T.S."/>
            <person name="Bentley S.D."/>
            <person name="Hothersall J."/>
            <person name="Stephens E."/>
            <person name="Thomas C.M."/>
            <person name="Parkhill J."/>
            <person name="Levy S.B."/>
            <person name="Rainey P.B."/>
            <person name="Thomson N.R."/>
        </authorList>
    </citation>
    <scope>NUCLEOTIDE SEQUENCE [LARGE SCALE GENOMIC DNA]</scope>
    <source>
        <strain>SBW25</strain>
    </source>
</reference>
<comment type="function">
    <text evidence="1">Part of the twin-arginine translocation (Tat) system that transports large folded proteins containing a characteristic twin-arginine motif in their signal peptide across membranes. TatA could form the protein-conducting channel of the Tat system.</text>
</comment>
<comment type="subunit">
    <text evidence="1">The Tat system comprises two distinct complexes: a TatABC complex, containing multiple copies of TatA, TatB and TatC subunits, and a separate TatA complex, containing only TatA subunits. Substrates initially bind to the TatABC complex, which probably triggers association of the separate TatA complex to form the active translocon.</text>
</comment>
<comment type="subcellular location">
    <subcellularLocation>
        <location evidence="1">Cell inner membrane</location>
        <topology evidence="1">Single-pass membrane protein</topology>
    </subcellularLocation>
</comment>
<comment type="similarity">
    <text evidence="1">Belongs to the TatA/E family.</text>
</comment>
<sequence length="92" mass="10332">MGIFDWKHWIVILVVVVLVFGTKKLKNLGTDVGESIKGFRKAMNDDEKPADPVVNPVPPAQPVHPQATQPITERRTFDVQAEKVEEPTRKDS</sequence>
<accession>C3K8T9</accession>
<feature type="chain" id="PRO_1000204440" description="Sec-independent protein translocase protein TatA">
    <location>
        <begin position="1"/>
        <end position="92"/>
    </location>
</feature>
<feature type="transmembrane region" description="Helical" evidence="1">
    <location>
        <begin position="1"/>
        <end position="21"/>
    </location>
</feature>
<feature type="region of interest" description="Disordered" evidence="2">
    <location>
        <begin position="44"/>
        <end position="92"/>
    </location>
</feature>
<feature type="compositionally biased region" description="Basic and acidic residues" evidence="2">
    <location>
        <begin position="72"/>
        <end position="92"/>
    </location>
</feature>